<proteinExistence type="evidence at protein level"/>
<comment type="function">
    <text evidence="2 4 5 7">Potently blocks voltage-gated potassium channels Kv1.1/KCNA1 (IC(50)=7-11 nM) and Kv1.3/KCNA3 (IC(50)=11-29 pM) (PubMed:15498765, PubMed:24676092, PubMed:9359871). Also mildly blocks intermediate (IK) conductance calcium-activated potassium channels (KCa3.1/KCNN4) and ERG1/Kv11.1/KCNH2 (PubMed:15498765, PubMed:18687312). Shows ability to suppress proliferation of lymphocytes, which are known to be sensitive to Kv1.3/KCNA3 homotetrameric channel block (PubMed:24676092).</text>
</comment>
<comment type="subcellular location">
    <subcellularLocation>
        <location evidence="7">Secreted</location>
    </subcellularLocation>
</comment>
<comment type="tissue specificity">
    <text evidence="14">Expressed by the venom gland.</text>
</comment>
<comment type="domain">
    <text evidence="1 3">Has the structural arrangement of an alpha-helix connected to a beta-sheet by disulfide bonds (CSalpha/beta).</text>
</comment>
<comment type="domain">
    <text evidence="11">The lower affinity for Kv1.1/KCNA1 is due to HsTX1 inability to come close to the pore domain, which prevents the pore-inserting lysine (Lys-23) from making proper contacts with the tyrosine carbonyls in the selectivity filter of the channel.</text>
</comment>
<comment type="PTM">
    <text evidence="7">Amidated (PubMed:9359871). The amidated toxin shows 5-fold more affinity for Kv1.3/KCNA3 than the synthetic carboxylated form (PubMed:9359871).</text>
</comment>
<comment type="mass spectrometry" mass="3815.63" method="MALDI" evidence="7"/>
<comment type="pharmaceutical">
    <text evidence="12 13">Some analogs of this peptide are potential candidate for treatment of autoimmune diseases through block of Kv1.3/KCNA3.</text>
</comment>
<comment type="miscellaneous">
    <text evidence="2 5">Negative results: does not block Kv1.2/KCNA2 potassium channels (PubMed:15498765). Does not induce hemolysis (PubMed:24676092).</text>
</comment>
<comment type="miscellaneous">
    <text evidence="6">PEGylation of HsTX1[R14A] enhances its circulating half-life in rats, reduces its affinity but not its selectivity for Kv1.3/KCNA3, and dramatically reduces its adsorption to inert surfaces. PEG-HsTX1[R14A] is equipotent to HsTX1[R14A] in preferential inhibition of human and rat CCR7(-) effector memory T lymphocytes (TEM) proliferation, leaving CCR7(+) naive and central memory T cells able to proliferate. It reduces inflammation in an active delayed-type hypersensitivity model and in the pristane-induced arthritis (PIA) model of rheumatoid arthritis (RA). Importantly, a single subcutaneous dose of PEG-HsTX1[R14A] reduces inflammation in PIA for a longer period of time than the non-PEGylated HsTX1[R14A]. Together, these data indicate that HsTX1[R14A] and PEG-HsTX1[R14A] are effective in a model of RA and are therefore potential therapeutics for TEM cell-mediated autoimmune diseases.</text>
</comment>
<comment type="similarity">
    <text evidence="9">Belongs to the short scorpion toxin superfamily. Potassium channel inhibitor family. Alpha-KTx 06 subfamily.</text>
</comment>
<dbReference type="PDB" id="1QUZ">
    <property type="method" value="NMR"/>
    <property type="chains" value="A=1-34"/>
</dbReference>
<dbReference type="PDB" id="1WPD">
    <property type="method" value="NMR"/>
    <property type="chains" value="A=7-34"/>
</dbReference>
<dbReference type="PDB" id="1Y2P">
    <property type="method" value="NMR"/>
    <property type="chains" value="A=1-34"/>
</dbReference>
<dbReference type="PDBsum" id="1QUZ"/>
<dbReference type="PDBsum" id="1WPD"/>
<dbReference type="PDBsum" id="1Y2P"/>
<dbReference type="BMRB" id="P59867"/>
<dbReference type="SMR" id="P59867"/>
<dbReference type="EvolutionaryTrace" id="P59867"/>
<dbReference type="GO" id="GO:0005576">
    <property type="term" value="C:extracellular region"/>
    <property type="evidence" value="ECO:0007669"/>
    <property type="project" value="UniProtKB-SubCell"/>
</dbReference>
<dbReference type="GO" id="GO:0008200">
    <property type="term" value="F:ion channel inhibitor activity"/>
    <property type="evidence" value="ECO:0007669"/>
    <property type="project" value="InterPro"/>
</dbReference>
<dbReference type="GO" id="GO:0015459">
    <property type="term" value="F:potassium channel regulator activity"/>
    <property type="evidence" value="ECO:0007669"/>
    <property type="project" value="UniProtKB-KW"/>
</dbReference>
<dbReference type="GO" id="GO:0090729">
    <property type="term" value="F:toxin activity"/>
    <property type="evidence" value="ECO:0007669"/>
    <property type="project" value="UniProtKB-KW"/>
</dbReference>
<dbReference type="Gene3D" id="3.30.30.10">
    <property type="entry name" value="Knottin, scorpion toxin-like"/>
    <property type="match status" value="1"/>
</dbReference>
<dbReference type="InterPro" id="IPR036574">
    <property type="entry name" value="Scorpion_toxin-like_sf"/>
</dbReference>
<dbReference type="InterPro" id="IPR001947">
    <property type="entry name" value="Scorpion_toxinS_K_inh"/>
</dbReference>
<dbReference type="Pfam" id="PF00451">
    <property type="entry name" value="Toxin_2"/>
    <property type="match status" value="1"/>
</dbReference>
<dbReference type="PRINTS" id="PR00286">
    <property type="entry name" value="CHARYBDTOXIN"/>
</dbReference>
<dbReference type="SUPFAM" id="SSF57095">
    <property type="entry name" value="Scorpion toxin-like"/>
    <property type="match status" value="1"/>
</dbReference>
<dbReference type="PROSITE" id="PS01138">
    <property type="entry name" value="SCORP_SHORT_TOXIN"/>
    <property type="match status" value="1"/>
</dbReference>
<sequence length="34" mass="3828">ASCRTPKDCADPCRKETGCPYGKCMNRKCKCNRC</sequence>
<feature type="peptide" id="PRO_0000044908" description="Potassium channel toxin alpha-KTx 6.3" evidence="7">
    <location>
        <begin position="1"/>
        <end position="34"/>
    </location>
</feature>
<feature type="site" description="Important for activity" evidence="10">
    <location>
        <position position="21"/>
    </location>
</feature>
<feature type="site" description="Critical for activity (is inserted in the pore, pointing downward)" evidence="10">
    <location>
        <position position="23"/>
    </location>
</feature>
<feature type="site" description="Important for activity" evidence="10">
    <location>
        <position position="25"/>
    </location>
</feature>
<feature type="site" description="Important for activity" evidence="10">
    <location>
        <position position="26"/>
    </location>
</feature>
<feature type="site" description="Important for activity" evidence="10">
    <location>
        <position position="33"/>
    </location>
</feature>
<feature type="modified residue" description="Cysteine amide" evidence="7">
    <location>
        <position position="34"/>
    </location>
</feature>
<feature type="disulfide bond" evidence="1 2 3 15 16">
    <location>
        <begin position="3"/>
        <end position="24"/>
    </location>
</feature>
<feature type="disulfide bond" evidence="1 2 3 15 16">
    <location>
        <begin position="9"/>
        <end position="29"/>
    </location>
</feature>
<feature type="disulfide bond" evidence="1 2 3 15 16">
    <location>
        <begin position="13"/>
        <end position="31"/>
    </location>
</feature>
<feature type="disulfide bond" evidence="1 2 3 16">
    <location>
        <begin position="19"/>
        <end position="34"/>
    </location>
</feature>
<feature type="mutagenesis site" description="Increase in selectivity for Kv1.3/KCNA3 over Kv1.1/KCNA1 (&gt;2000-fold more selective). Very weak decrease in inhibition of Kv1.3/KCNA3 and important decrease in inhibition of Kv1.1/KCNA1. No change in ability to suppress lymphocyte proliferation." evidence="5 6">
    <original>R</original>
    <variation>A</variation>
    <location>
        <position position="14"/>
    </location>
</feature>
<feature type="helix" evidence="17">
    <location>
        <begin position="6"/>
        <end position="9"/>
    </location>
</feature>
<feature type="helix" evidence="17">
    <location>
        <begin position="10"/>
        <end position="16"/>
    </location>
</feature>
<feature type="strand" evidence="18">
    <location>
        <begin position="18"/>
        <end position="20"/>
    </location>
</feature>
<feature type="strand" evidence="17">
    <location>
        <begin position="22"/>
        <end position="27"/>
    </location>
</feature>
<feature type="strand" evidence="17">
    <location>
        <begin position="29"/>
        <end position="31"/>
    </location>
</feature>
<protein>
    <recommendedName>
        <fullName>Potassium channel toxin alpha-KTx 6.3</fullName>
    </recommendedName>
    <alternativeName>
        <fullName evidence="8">Neurotoxin HsTX1</fullName>
    </alternativeName>
</protein>
<accession>P59867</accession>
<name>KAX63_HETSP</name>
<organism>
    <name type="scientific">Heterometrus spinifer</name>
    <name type="common">Asia giant forest scorpion</name>
    <name type="synonym">Malaysian black scorpion</name>
    <dbReference type="NCBI Taxonomy" id="118530"/>
    <lineage>
        <taxon>Eukaryota</taxon>
        <taxon>Metazoa</taxon>
        <taxon>Ecdysozoa</taxon>
        <taxon>Arthropoda</taxon>
        <taxon>Chelicerata</taxon>
        <taxon>Arachnida</taxon>
        <taxon>Scorpiones</taxon>
        <taxon>Iurida</taxon>
        <taxon>Scorpionoidea</taxon>
        <taxon>Scorpionidae</taxon>
        <taxon>Heterometrinae</taxon>
        <taxon>Heterometrus</taxon>
    </lineage>
</organism>
<keyword id="KW-0002">3D-structure</keyword>
<keyword id="KW-0027">Amidation</keyword>
<keyword id="KW-1221">Calcium-activated potassium channel impairing toxin</keyword>
<keyword id="KW-0903">Direct protein sequencing</keyword>
<keyword id="KW-1015">Disulfide bond</keyword>
<keyword id="KW-0872">Ion channel impairing toxin</keyword>
<keyword id="KW-0528">Neurotoxin</keyword>
<keyword id="KW-0582">Pharmaceutical</keyword>
<keyword id="KW-0632">Potassium channel impairing toxin</keyword>
<keyword id="KW-0964">Secreted</keyword>
<keyword id="KW-0800">Toxin</keyword>
<keyword id="KW-1220">Voltage-gated potassium channel impairing toxin</keyword>
<reference key="1">
    <citation type="journal article" date="1997" name="Biochem. J.">
        <title>A four-disulphide-bridged toxin, with high affinity towards voltage-gated K+ channels, isolated from Heterometrus spinnifer (Scorpionidae) venom.</title>
        <authorList>
            <person name="Lebrun B."/>
            <person name="Romi-Lebrun R."/>
            <person name="Martin-Eauclaire M.-F."/>
            <person name="Yasuda A."/>
            <person name="Ishiguro M."/>
            <person name="Oyama Y."/>
            <person name="Pongs O."/>
            <person name="Nakajima T."/>
        </authorList>
    </citation>
    <scope>PROTEIN SEQUENCE</scope>
    <scope>FUNCTION</scope>
    <scope>MASS SPECTROMETRY</scope>
    <scope>DISULFIDE BONDS</scope>
    <scope>AMIDATION AT CYS-34</scope>
    <scope>SUBCELLULAR LOCATION</scope>
    <source>
        <tissue>Venom</tissue>
    </source>
</reference>
<reference key="2">
    <citation type="journal article" date="2008" name="Biochem. Pharmacol.">
        <title>A common 'hot spot' confers hERG blockade activity to alpha-scorpion toxins affecting K+ channels.</title>
        <authorList>
            <person name="Abdel-Mottaleb Y."/>
            <person name="Corzo G."/>
            <person name="Martin-Eauclaire M.F."/>
            <person name="Satake H."/>
            <person name="Ceard B."/>
            <person name="Peigneur S."/>
            <person name="Nambaru P."/>
            <person name="Bougis P.E."/>
            <person name="Possani L.D."/>
            <person name="Tytgat J."/>
        </authorList>
    </citation>
    <scope>FUNCTION</scope>
</reference>
<reference key="3">
    <citation type="journal article" date="2014" name="J. Phys. Chem. B">
        <title>Free energy simulations of binding of HsTx1 toxin to Kv1 potassium channels: the basis of Kv1.3/Kv1.1 selectivity.</title>
        <authorList>
            <person name="Rashid M.H."/>
            <person name="Kuyucak S."/>
        </authorList>
    </citation>
    <scope>3D-STRUCTURE MODELING IN COMPLEX WITH KV1.1; KV1.2 AND KV1.3</scope>
</reference>
<reference key="4">
    <citation type="journal article" date="2014" name="Sci. Rep.">
        <title>A potent and Kv1.3-selective analogue of the scorpion toxin HsTX1 as a potential therapeutic for autoimmune diseases.</title>
        <authorList>
            <person name="Rashid M.H."/>
            <person name="Huq R."/>
            <person name="Tanner M.R."/>
            <person name="Chhabra S."/>
            <person name="Khoo K.K."/>
            <person name="Estrada R."/>
            <person name="Dhawan V."/>
            <person name="Chauhan S."/>
            <person name="Pennington M.W."/>
            <person name="Beeton C."/>
            <person name="Kuyucak S."/>
            <person name="Norton R.S."/>
        </authorList>
    </citation>
    <scope>FUNCTION</scope>
    <scope>SYNTHESIS</scope>
    <scope>3D-STRUCTURE MODELING IN COMPLEX WITH KV1.1 AND KV1.3</scope>
    <scope>MUTAGENESIS OF ARG-14</scope>
    <scope>PHARMACEUTICAL</scope>
</reference>
<reference key="5">
    <citation type="journal article" date="2017" name="Clin. Immunol.">
        <title>Prolonged immunomodulation in inflammatory arthritis using the selective Kv1.3 channel blocker HsTX1[R14A] and its PEGylated analog.</title>
        <authorList>
            <person name="Tanner M.R."/>
            <person name="Tajhya R.B."/>
            <person name="Huq R."/>
            <person name="Gehrmann E.J."/>
            <person name="Rodarte K.E."/>
            <person name="Atik M.A."/>
            <person name="Norton R.S."/>
            <person name="Pennington M.W."/>
            <person name="Beeton C."/>
        </authorList>
    </citation>
    <scope>FUNCTION</scope>
    <scope>MUTAGENESIS OF ARG-14</scope>
    <scope>PEGYLATION OF MUTANT HSTX1[R14A]</scope>
    <scope>PHARMACEUTICAL</scope>
</reference>
<reference key="6">
    <citation type="journal article" date="1999" name="Protein Sci.">
        <title>Structural and functional consequences of the presence of a fourth disulfide bridge in the scorpion short toxins: solution structure of the potassium channel inhibitor HsTX1.</title>
        <authorList>
            <person name="Savarin P."/>
            <person name="Romi-Lebrun R."/>
            <person name="Zinn-Justin S."/>
            <person name="Lebrun B."/>
            <person name="Nakajima T."/>
            <person name="Gilquin B."/>
            <person name="Menez A."/>
        </authorList>
    </citation>
    <scope>STRUCTURE BY NMR</scope>
    <scope>DISULFIDE BONDS</scope>
</reference>
<reference key="7">
    <citation type="journal article" date="2004" name="J. Biol. Chem.">
        <title>Evidence for domain-specific recognition of SK and Kv channels by MTX and HsTx1 scorpion toxins.</title>
        <authorList>
            <person name="Regaya I."/>
            <person name="Beeton C."/>
            <person name="Ferrat G."/>
            <person name="Andreotti N."/>
            <person name="Darbon H."/>
            <person name="De Waard M."/>
            <person name="Sabatier J.M."/>
        </authorList>
    </citation>
    <scope>STRUCTURE BY NMR OF A MAUROTOXIN-HSTX1 CHIMERA</scope>
    <scope>FUNCTION</scope>
</reference>
<reference key="8">
    <citation type="journal article" date="2005" name="Proteins">
        <title>The impact of the fourth disulfide bridge in scorpion toxins of the alpha-KTx6 subfamily.</title>
        <authorList>
            <person name="Carrega L."/>
            <person name="Mosbah A."/>
            <person name="Ferrat G."/>
            <person name="Beeton C."/>
            <person name="Andreotti N."/>
            <person name="Mansuelle P."/>
            <person name="Darbon H."/>
            <person name="De Waard M."/>
            <person name="Sabatier J.M."/>
        </authorList>
    </citation>
    <scope>STRUCTURE BY NMR</scope>
    <scope>DISULFIDE BONDS</scope>
</reference>
<evidence type="ECO:0000269" key="1">
    <source>
    </source>
</evidence>
<evidence type="ECO:0000269" key="2">
    <source>
    </source>
</evidence>
<evidence type="ECO:0000269" key="3">
    <source>
    </source>
</evidence>
<evidence type="ECO:0000269" key="4">
    <source>
    </source>
</evidence>
<evidence type="ECO:0000269" key="5">
    <source>
    </source>
</evidence>
<evidence type="ECO:0000269" key="6">
    <source>
    </source>
</evidence>
<evidence type="ECO:0000269" key="7">
    <source>
    </source>
</evidence>
<evidence type="ECO:0000303" key="8">
    <source>
    </source>
</evidence>
<evidence type="ECO:0000305" key="9"/>
<evidence type="ECO:0000305" key="10">
    <source>
    </source>
</evidence>
<evidence type="ECO:0000305" key="11">
    <source>
    </source>
</evidence>
<evidence type="ECO:0000305" key="12">
    <source>
    </source>
</evidence>
<evidence type="ECO:0000305" key="13">
    <source>
    </source>
</evidence>
<evidence type="ECO:0000305" key="14">
    <source>
    </source>
</evidence>
<evidence type="ECO:0000312" key="15">
    <source>
        <dbReference type="PDB" id="1Y2P"/>
    </source>
</evidence>
<evidence type="ECO:0007744" key="16">
    <source>
        <dbReference type="PDB" id="1QUZ"/>
    </source>
</evidence>
<evidence type="ECO:0007829" key="17">
    <source>
        <dbReference type="PDB" id="1QUZ"/>
    </source>
</evidence>
<evidence type="ECO:0007829" key="18">
    <source>
        <dbReference type="PDB" id="1Y2P"/>
    </source>
</evidence>